<gene>
    <name type="primary">NST1</name>
    <name type="ORF">CHGG_05007</name>
</gene>
<comment type="function">
    <text evidence="1">May act as a negative regulator of salt tolerance.</text>
</comment>
<comment type="subcellular location">
    <subcellularLocation>
        <location evidence="1">Cytoplasm</location>
    </subcellularLocation>
</comment>
<comment type="similarity">
    <text evidence="4">Belongs to the NST1 family.</text>
</comment>
<reference key="1">
    <citation type="journal article" date="2015" name="Genome Announc.">
        <title>Draft genome sequence of the cellulolytic fungus Chaetomium globosum.</title>
        <authorList>
            <person name="Cuomo C.A."/>
            <person name="Untereiner W.A."/>
            <person name="Ma L.-J."/>
            <person name="Grabherr M."/>
            <person name="Birren B.W."/>
        </authorList>
    </citation>
    <scope>NUCLEOTIDE SEQUENCE [LARGE SCALE GENOMIC DNA]</scope>
    <source>
        <strain>ATCC 6205 / CBS 148.51 / DSM 1962 / NBRC 6347 / NRRL 1970</strain>
    </source>
</reference>
<name>NST1_CHAGB</name>
<proteinExistence type="inferred from homology"/>
<evidence type="ECO:0000250" key="1"/>
<evidence type="ECO:0000255" key="2"/>
<evidence type="ECO:0000256" key="3">
    <source>
        <dbReference type="SAM" id="MobiDB-lite"/>
    </source>
</evidence>
<evidence type="ECO:0000305" key="4"/>
<feature type="chain" id="PRO_0000324446" description="Stress response protein NST1">
    <location>
        <begin position="1"/>
        <end position="1255"/>
    </location>
</feature>
<feature type="region of interest" description="Disordered" evidence="3">
    <location>
        <begin position="1"/>
        <end position="214"/>
    </location>
</feature>
<feature type="region of interest" description="Disordered" evidence="3">
    <location>
        <begin position="285"/>
        <end position="379"/>
    </location>
</feature>
<feature type="region of interest" description="Disordered" evidence="3">
    <location>
        <begin position="470"/>
        <end position="525"/>
    </location>
</feature>
<feature type="region of interest" description="Disordered" evidence="3">
    <location>
        <begin position="563"/>
        <end position="898"/>
    </location>
</feature>
<feature type="region of interest" description="Disordered" evidence="3">
    <location>
        <begin position="956"/>
        <end position="1080"/>
    </location>
</feature>
<feature type="coiled-coil region" evidence="2">
    <location>
        <begin position="547"/>
        <end position="745"/>
    </location>
</feature>
<feature type="compositionally biased region" description="Pro residues" evidence="3">
    <location>
        <begin position="1"/>
        <end position="19"/>
    </location>
</feature>
<feature type="compositionally biased region" description="Low complexity" evidence="3">
    <location>
        <begin position="50"/>
        <end position="61"/>
    </location>
</feature>
<feature type="compositionally biased region" description="Basic residues" evidence="3">
    <location>
        <begin position="76"/>
        <end position="86"/>
    </location>
</feature>
<feature type="compositionally biased region" description="Low complexity" evidence="3">
    <location>
        <begin position="87"/>
        <end position="96"/>
    </location>
</feature>
<feature type="compositionally biased region" description="Acidic residues" evidence="3">
    <location>
        <begin position="118"/>
        <end position="127"/>
    </location>
</feature>
<feature type="compositionally biased region" description="Basic residues" evidence="3">
    <location>
        <begin position="151"/>
        <end position="162"/>
    </location>
</feature>
<feature type="compositionally biased region" description="Pro residues" evidence="3">
    <location>
        <begin position="187"/>
        <end position="196"/>
    </location>
</feature>
<feature type="compositionally biased region" description="Basic and acidic residues" evidence="3">
    <location>
        <begin position="201"/>
        <end position="214"/>
    </location>
</feature>
<feature type="compositionally biased region" description="Acidic residues" evidence="3">
    <location>
        <begin position="330"/>
        <end position="376"/>
    </location>
</feature>
<feature type="compositionally biased region" description="Basic and acidic residues" evidence="3">
    <location>
        <begin position="470"/>
        <end position="481"/>
    </location>
</feature>
<feature type="compositionally biased region" description="Acidic residues" evidence="3">
    <location>
        <begin position="488"/>
        <end position="518"/>
    </location>
</feature>
<feature type="compositionally biased region" description="Basic and acidic residues" evidence="3">
    <location>
        <begin position="590"/>
        <end position="630"/>
    </location>
</feature>
<feature type="compositionally biased region" description="Basic and acidic residues" evidence="3">
    <location>
        <begin position="637"/>
        <end position="745"/>
    </location>
</feature>
<feature type="compositionally biased region" description="Pro residues" evidence="3">
    <location>
        <begin position="770"/>
        <end position="780"/>
    </location>
</feature>
<feature type="compositionally biased region" description="Low complexity" evidence="3">
    <location>
        <begin position="811"/>
        <end position="835"/>
    </location>
</feature>
<feature type="compositionally biased region" description="Polar residues" evidence="3">
    <location>
        <begin position="865"/>
        <end position="877"/>
    </location>
</feature>
<feature type="compositionally biased region" description="Polar residues" evidence="3">
    <location>
        <begin position="983"/>
        <end position="1004"/>
    </location>
</feature>
<feature type="compositionally biased region" description="Pro residues" evidence="3">
    <location>
        <begin position="1067"/>
        <end position="1080"/>
    </location>
</feature>
<protein>
    <recommendedName>
        <fullName>Stress response protein NST1</fullName>
    </recommendedName>
</protein>
<sequence>MKGNRNPPPPPSGPVPPSPTSKNTAKYTNKDGSKFITVPKMNTPIDSAQPSPTASSLAAKPALPPGPETEPPQTVNRKKQKRRAKAAAKAAAERAQNSPAINGLPSPSPTNDQQSADADPEDDEDEPGTGHDSGNQSLYLNGGAHGGAPGKSKKSKKKKKKNATGPAGGFPNNNPYAQDDRDHSPEPILPPPPPQQNRPGMSREKIWNTNSQEERERIKEFWLGLSEAERKSLVKVEKDAVLKKMKEQQKHTCSCTVCGRKRTAIEEELEGLYDAYYEELEQYANHPNQGEGPPMLRPRRSFGSMGGMRPRGLHSRFSNHQPSRGRIVDELEGDEEEEEVEAEAEDDGEGDEEGEDVYSEDELEDDMYSEEEQEPSEELHRSDYAADFFNFGNSLTVQGRDRLPILPSFLQNYPFSGTGNNAYGSSSLGGILTVADDLLKNDGKKFIEMMEQLAERRMAREEDARGQFERAYDHPNGERYVHSHPPPPDEEEFEDEEEEYEEDDEEEYNSPDEEDTMTEEQRMEEGRRMFQIFAARMFEQRVLTAYREKVAKERQAKLLEEIEAENQQDAQRKAKKAKDAQRRKDRAAKKKEAQAEEKARREAEKAAEEAARRAEEARKAEEQRAKAEEKRKKKEAQRKAEEEERQRKEAERLRKIQDREEAERKAREAREREKKTREEARLREKEAREQKERKDRERREQQERERREKEAKAKAEREAKEAKEAKEAKEGKDTKERRKKEERAAHKAAALAPAIPVPITLPKRSATQQPPAPPVAPVPVLPQQSTSYASPKVPVATPALPKAPTPMRARQTSQQDGSTASSGAASNSGSMASQNPSPHPITPVHASPGLMAPPSKSGVMGIGSQGSAQPPSHSASPMSFPAKLLPPQHSPFGIPPMGSAMSYPPPGLSQMPLGFANPLHREPLFPPMPGFRPASGMMPMPPGLNGPGVNRGFPLHPPPGFLGGPMESPAPSMAQAMSPGLQRDNQSPHSRQGSGSFDPSQPISRPTPIGRPASVVQGQRPSNWSPSSGPPKPEPEAHLGSRALLDDLDDGPQDFPGRLSRGGSAPGPRPAPGFPMPPFGMDPMFSHNPWAPPGVVQPNLFGPHPPPSFSPLSAHTPMGMPWGHAMPSASTFGTPGAVDRPIEPRSVAVRKMLRRACEDLANAGSAEGRDSFIPLEMIKVQVENFNHGYPIDEKDLLDICETEGNEVNGGGSFDVVNDGQGGRSIRFVSGDQRTAPQPVQLAVGYNPGSPIGGGR</sequence>
<organism>
    <name type="scientific">Chaetomium globosum (strain ATCC 6205 / CBS 148.51 / DSM 1962 / NBRC 6347 / NRRL 1970)</name>
    <name type="common">Soil fungus</name>
    <dbReference type="NCBI Taxonomy" id="306901"/>
    <lineage>
        <taxon>Eukaryota</taxon>
        <taxon>Fungi</taxon>
        <taxon>Dikarya</taxon>
        <taxon>Ascomycota</taxon>
        <taxon>Pezizomycotina</taxon>
        <taxon>Sordariomycetes</taxon>
        <taxon>Sordariomycetidae</taxon>
        <taxon>Sordariales</taxon>
        <taxon>Chaetomiaceae</taxon>
        <taxon>Chaetomium</taxon>
    </lineage>
</organism>
<accession>Q2GZN9</accession>
<dbReference type="EMBL" id="CH408032">
    <property type="protein sequence ID" value="EAQ88388.1"/>
    <property type="molecule type" value="Genomic_DNA"/>
</dbReference>
<dbReference type="RefSeq" id="XP_001224221.1">
    <property type="nucleotide sequence ID" value="XM_001224220.1"/>
</dbReference>
<dbReference type="SMR" id="Q2GZN9"/>
<dbReference type="STRING" id="306901.Q2GZN9"/>
<dbReference type="GeneID" id="4391581"/>
<dbReference type="VEuPathDB" id="FungiDB:CHGG_05007"/>
<dbReference type="eggNOG" id="ENOG502QSSK">
    <property type="taxonomic scope" value="Eukaryota"/>
</dbReference>
<dbReference type="HOGENOM" id="CLU_002935_0_1_1"/>
<dbReference type="InParanoid" id="Q2GZN9"/>
<dbReference type="OMA" id="EEDTQYG"/>
<dbReference type="OrthoDB" id="21629at2759"/>
<dbReference type="Proteomes" id="UP000001056">
    <property type="component" value="Unassembled WGS sequence"/>
</dbReference>
<dbReference type="GO" id="GO:0005737">
    <property type="term" value="C:cytoplasm"/>
    <property type="evidence" value="ECO:0007669"/>
    <property type="project" value="UniProtKB-SubCell"/>
</dbReference>
<dbReference type="InterPro" id="IPR051195">
    <property type="entry name" value="Fungal_stress_NST1"/>
</dbReference>
<dbReference type="InterPro" id="IPR025279">
    <property type="entry name" value="NST1"/>
</dbReference>
<dbReference type="PANTHER" id="PTHR31780:SF10">
    <property type="entry name" value="LD36051P"/>
    <property type="match status" value="1"/>
</dbReference>
<dbReference type="PANTHER" id="PTHR31780">
    <property type="entry name" value="STRESS RESPONSE PROTEIN NST1-RELATED"/>
    <property type="match status" value="1"/>
</dbReference>
<dbReference type="Pfam" id="PF13945">
    <property type="entry name" value="NST1"/>
    <property type="match status" value="1"/>
</dbReference>
<keyword id="KW-0175">Coiled coil</keyword>
<keyword id="KW-0963">Cytoplasm</keyword>
<keyword id="KW-1185">Reference proteome</keyword>
<keyword id="KW-0346">Stress response</keyword>